<sequence length="471" mass="51845">MAAVATGNVDKLKSDVASLSQISENEKNGFINLVSRYVSGEEAQHVEWSKIQTPTDEVVVPYDGLAPTPEDPEEIKKLLDKLVVLKLNGGLGTTMGCTGPKSVIEVRNGLTFLDLIVIQIENLNNKYGSCVPLLLMNSFNTHDDTQKIVEKYSKSNVQIHTFNQSQYPRLVVEDFSPLPSKGQTGKDGWYPPGHGDVFPSLKNSGKLDLLLSQGKEYVFIANSDNLGAVVDLKILHHLIQKKNEYCMEVTPKTLADVKGGTLISYEGRVQLLEIAQVPDQHVNEFKSIEKFKIFNTNNLWVNLNAIKRLVEADALKMEIIPNPKEVDGVKVLQLETAAGAAIRFFNHAIGINVPRSRFLPVKATSDLLLVQSDLYTLQDGFVTRNSARKNPENPTIELGPEFKKVGSYLSRFKSIPSILELESLKVSGDVWFGAGVVLKGKVTITAKSGVKLEIPDNAVIANKDINGPEDL</sequence>
<comment type="function">
    <text>Plays a central role as a glucosyl donor in cellular metabolic pathways.</text>
</comment>
<comment type="catalytic activity">
    <reaction>
        <text>alpha-D-glucose 1-phosphate + UTP + H(+) = UDP-alpha-D-glucose + diphosphate</text>
        <dbReference type="Rhea" id="RHEA:19889"/>
        <dbReference type="ChEBI" id="CHEBI:15378"/>
        <dbReference type="ChEBI" id="CHEBI:33019"/>
        <dbReference type="ChEBI" id="CHEBI:46398"/>
        <dbReference type="ChEBI" id="CHEBI:58601"/>
        <dbReference type="ChEBI" id="CHEBI:58885"/>
        <dbReference type="EC" id="2.7.7.9"/>
    </reaction>
</comment>
<comment type="subcellular location">
    <subcellularLocation>
        <location>Cytoplasm</location>
    </subcellularLocation>
</comment>
<comment type="similarity">
    <text evidence="3">Belongs to the UDPGP type 1 family.</text>
</comment>
<keyword id="KW-0963">Cytoplasm</keyword>
<keyword id="KW-0548">Nucleotidyltransferase</keyword>
<keyword id="KW-0808">Transferase</keyword>
<name>UGPA_PYRPY</name>
<evidence type="ECO:0000250" key="1">
    <source>
        <dbReference type="UniProtKB" id="Q16851"/>
    </source>
</evidence>
<evidence type="ECO:0000250" key="2">
    <source>
        <dbReference type="UniProtKB" id="Q9M9P3"/>
    </source>
</evidence>
<evidence type="ECO:0000305" key="3"/>
<dbReference type="EC" id="2.7.7.9"/>
<dbReference type="EMBL" id="AB013353">
    <property type="protein sequence ID" value="BAA25917.1"/>
    <property type="molecule type" value="mRNA"/>
</dbReference>
<dbReference type="SMR" id="O64459"/>
<dbReference type="GO" id="GO:0005737">
    <property type="term" value="C:cytoplasm"/>
    <property type="evidence" value="ECO:0007669"/>
    <property type="project" value="UniProtKB-SubCell"/>
</dbReference>
<dbReference type="GO" id="GO:0003983">
    <property type="term" value="F:UTP:glucose-1-phosphate uridylyltransferase activity"/>
    <property type="evidence" value="ECO:0007669"/>
    <property type="project" value="UniProtKB-EC"/>
</dbReference>
<dbReference type="GO" id="GO:0006011">
    <property type="term" value="P:UDP-alpha-D-glucose metabolic process"/>
    <property type="evidence" value="ECO:0007669"/>
    <property type="project" value="InterPro"/>
</dbReference>
<dbReference type="CDD" id="cd00897">
    <property type="entry name" value="UGPase_euk"/>
    <property type="match status" value="1"/>
</dbReference>
<dbReference type="FunFam" id="2.160.10.10:FF:000001">
    <property type="entry name" value="UTP--glucose-1-phosphate uridylyltransferase"/>
    <property type="match status" value="1"/>
</dbReference>
<dbReference type="FunFam" id="3.90.550.10:FF:000073">
    <property type="entry name" value="UTP--glucose-1-phosphate uridylyltransferase"/>
    <property type="match status" value="1"/>
</dbReference>
<dbReference type="Gene3D" id="2.160.10.10">
    <property type="entry name" value="Hexapeptide repeat proteins"/>
    <property type="match status" value="1"/>
</dbReference>
<dbReference type="Gene3D" id="3.90.550.10">
    <property type="entry name" value="Spore Coat Polysaccharide Biosynthesis Protein SpsA, Chain A"/>
    <property type="match status" value="1"/>
</dbReference>
<dbReference type="InterPro" id="IPR029044">
    <property type="entry name" value="Nucleotide-diphossugar_trans"/>
</dbReference>
<dbReference type="InterPro" id="IPR002618">
    <property type="entry name" value="UDPGP_fam"/>
</dbReference>
<dbReference type="InterPro" id="IPR016267">
    <property type="entry name" value="UDPGP_trans"/>
</dbReference>
<dbReference type="PANTHER" id="PTHR43511">
    <property type="match status" value="1"/>
</dbReference>
<dbReference type="Pfam" id="PF01704">
    <property type="entry name" value="UDPGP"/>
    <property type="match status" value="1"/>
</dbReference>
<dbReference type="PIRSF" id="PIRSF000806">
    <property type="entry name" value="UDPGP"/>
    <property type="match status" value="1"/>
</dbReference>
<dbReference type="SUPFAM" id="SSF53448">
    <property type="entry name" value="Nucleotide-diphospho-sugar transferases"/>
    <property type="match status" value="1"/>
</dbReference>
<accession>O64459</accession>
<reference key="1">
    <citation type="online journal article" date="1999" name="Plant Gene Register">
        <title>Molecular cloning and nucleotide sequencing of a cDNA encoding UDP-glucose pyrophosphorylase of Japanese pear (Pyrus pyrifolia Nakai).</title>
        <authorList>
            <person name="Kiyozumi D."/>
            <person name="Ishimizu T."/>
            <person name="Nakanishi T."/>
            <person name="Sakiyama F."/>
            <person name="Norioka S."/>
        </authorList>
        <locator>PGR99-006</locator>
    </citation>
    <scope>NUCLEOTIDE SEQUENCE [MRNA]</scope>
    <source>
        <strain>cv. Nijisseiki</strain>
        <tissue>Pollen</tissue>
    </source>
</reference>
<feature type="chain" id="PRO_0000185761" description="UTP--glucose-1-phosphate uridylyltransferase">
    <location>
        <begin position="1"/>
        <end position="471"/>
    </location>
</feature>
<feature type="binding site" evidence="2">
    <location>
        <begin position="87"/>
        <end position="90"/>
    </location>
    <ligand>
        <name>UTP</name>
        <dbReference type="ChEBI" id="CHEBI:46398"/>
    </ligand>
</feature>
<feature type="binding site" evidence="1">
    <location>
        <begin position="89"/>
        <end position="90"/>
    </location>
    <ligand>
        <name>substrate</name>
    </ligand>
</feature>
<feature type="binding site" evidence="2">
    <location>
        <position position="101"/>
    </location>
    <ligand>
        <name>UTP</name>
        <dbReference type="ChEBI" id="CHEBI:46398"/>
    </ligand>
</feature>
<feature type="binding site" evidence="2">
    <location>
        <position position="164"/>
    </location>
    <ligand>
        <name>UTP</name>
        <dbReference type="ChEBI" id="CHEBI:46398"/>
    </ligand>
</feature>
<feature type="binding site" evidence="2">
    <location>
        <position position="193"/>
    </location>
    <ligand>
        <name>UTP</name>
        <dbReference type="ChEBI" id="CHEBI:46398"/>
    </ligand>
</feature>
<feature type="binding site" evidence="1">
    <location>
        <position position="194"/>
    </location>
    <ligand>
        <name>substrate</name>
    </ligand>
</feature>
<feature type="binding site" evidence="1">
    <location>
        <begin position="222"/>
        <end position="224"/>
    </location>
    <ligand>
        <name>substrate</name>
    </ligand>
</feature>
<feature type="binding site" evidence="2">
    <location>
        <position position="224"/>
    </location>
    <ligand>
        <name>UTP</name>
        <dbReference type="ChEBI" id="CHEBI:46398"/>
    </ligand>
</feature>
<feature type="binding site" evidence="2">
    <location>
        <position position="362"/>
    </location>
    <ligand>
        <name>UTP</name>
        <dbReference type="ChEBI" id="CHEBI:46398"/>
    </ligand>
</feature>
<protein>
    <recommendedName>
        <fullName>UTP--glucose-1-phosphate uridylyltransferase</fullName>
        <ecNumber>2.7.7.9</ecNumber>
    </recommendedName>
    <alternativeName>
        <fullName>UDP-glucose pyrophosphorylase</fullName>
        <shortName>UDPGP</shortName>
        <shortName>UGPase</shortName>
    </alternativeName>
</protein>
<proteinExistence type="evidence at transcript level"/>
<organism>
    <name type="scientific">Pyrus pyrifolia</name>
    <name type="common">Chinese pear</name>
    <name type="synonym">Pyrus serotina</name>
    <dbReference type="NCBI Taxonomy" id="3767"/>
    <lineage>
        <taxon>Eukaryota</taxon>
        <taxon>Viridiplantae</taxon>
        <taxon>Streptophyta</taxon>
        <taxon>Embryophyta</taxon>
        <taxon>Tracheophyta</taxon>
        <taxon>Spermatophyta</taxon>
        <taxon>Magnoliopsida</taxon>
        <taxon>eudicotyledons</taxon>
        <taxon>Gunneridae</taxon>
        <taxon>Pentapetalae</taxon>
        <taxon>rosids</taxon>
        <taxon>fabids</taxon>
        <taxon>Rosales</taxon>
        <taxon>Rosaceae</taxon>
        <taxon>Amygdaloideae</taxon>
        <taxon>Maleae</taxon>
        <taxon>Pyrus</taxon>
    </lineage>
</organism>